<feature type="chain" id="PRO_1000190839" description="Translation initiation factor IF-3">
    <location>
        <begin position="1"/>
        <end position="178"/>
    </location>
</feature>
<sequence length="178" mass="20605">MSTIAKDQTQINDRIRAKELRLIGHDGEQLGVKTKFEAIEIAERVNLDVVLVAPNAKPPVAKIMDYGKFKFEQQKKEKEARKKQKVVTVKEIRLSPTIEDHDFNTKLKNARKFLEKEDKVKVSIRFRGRAITHKEFGQRVLEKFAEECKDLATVEQKPKMDGRSMFLMLAPIVDKKQN</sequence>
<protein>
    <recommendedName>
        <fullName evidence="1">Translation initiation factor IF-3</fullName>
    </recommendedName>
</protein>
<dbReference type="EMBL" id="AP009484">
    <property type="protein sequence ID" value="BAH18052.1"/>
    <property type="molecule type" value="Genomic_DNA"/>
</dbReference>
<dbReference type="RefSeq" id="WP_012657250.1">
    <property type="nucleotide sequence ID" value="NC_011999.1"/>
</dbReference>
<dbReference type="SMR" id="B9E784"/>
<dbReference type="STRING" id="458233.MCCL_1345"/>
<dbReference type="GeneID" id="61128752"/>
<dbReference type="KEGG" id="mcl:MCCL_1345"/>
<dbReference type="eggNOG" id="COG0290">
    <property type="taxonomic scope" value="Bacteria"/>
</dbReference>
<dbReference type="HOGENOM" id="CLU_054919_3_2_9"/>
<dbReference type="OrthoDB" id="9806014at2"/>
<dbReference type="Proteomes" id="UP000001383">
    <property type="component" value="Chromosome"/>
</dbReference>
<dbReference type="GO" id="GO:0005829">
    <property type="term" value="C:cytosol"/>
    <property type="evidence" value="ECO:0007669"/>
    <property type="project" value="TreeGrafter"/>
</dbReference>
<dbReference type="GO" id="GO:0016020">
    <property type="term" value="C:membrane"/>
    <property type="evidence" value="ECO:0007669"/>
    <property type="project" value="TreeGrafter"/>
</dbReference>
<dbReference type="GO" id="GO:0043022">
    <property type="term" value="F:ribosome binding"/>
    <property type="evidence" value="ECO:0007669"/>
    <property type="project" value="TreeGrafter"/>
</dbReference>
<dbReference type="GO" id="GO:0003743">
    <property type="term" value="F:translation initiation factor activity"/>
    <property type="evidence" value="ECO:0007669"/>
    <property type="project" value="UniProtKB-UniRule"/>
</dbReference>
<dbReference type="GO" id="GO:0032790">
    <property type="term" value="P:ribosome disassembly"/>
    <property type="evidence" value="ECO:0007669"/>
    <property type="project" value="TreeGrafter"/>
</dbReference>
<dbReference type="FunFam" id="3.10.20.80:FF:000001">
    <property type="entry name" value="Translation initiation factor IF-3"/>
    <property type="match status" value="1"/>
</dbReference>
<dbReference type="FunFam" id="3.30.110.10:FF:000001">
    <property type="entry name" value="Translation initiation factor IF-3"/>
    <property type="match status" value="1"/>
</dbReference>
<dbReference type="Gene3D" id="3.30.110.10">
    <property type="entry name" value="Translation initiation factor 3 (IF-3), C-terminal domain"/>
    <property type="match status" value="1"/>
</dbReference>
<dbReference type="Gene3D" id="3.10.20.80">
    <property type="entry name" value="Translation initiation factor 3 (IF-3), N-terminal domain"/>
    <property type="match status" value="1"/>
</dbReference>
<dbReference type="HAMAP" id="MF_00080">
    <property type="entry name" value="IF_3"/>
    <property type="match status" value="1"/>
</dbReference>
<dbReference type="InterPro" id="IPR036788">
    <property type="entry name" value="T_IF-3_C_sf"/>
</dbReference>
<dbReference type="InterPro" id="IPR036787">
    <property type="entry name" value="T_IF-3_N_sf"/>
</dbReference>
<dbReference type="InterPro" id="IPR019813">
    <property type="entry name" value="Translation_initiation_fac3_CS"/>
</dbReference>
<dbReference type="InterPro" id="IPR001288">
    <property type="entry name" value="Translation_initiation_fac_3"/>
</dbReference>
<dbReference type="InterPro" id="IPR019815">
    <property type="entry name" value="Translation_initiation_fac_3_C"/>
</dbReference>
<dbReference type="InterPro" id="IPR019814">
    <property type="entry name" value="Translation_initiation_fac_3_N"/>
</dbReference>
<dbReference type="NCBIfam" id="TIGR00168">
    <property type="entry name" value="infC"/>
    <property type="match status" value="1"/>
</dbReference>
<dbReference type="PANTHER" id="PTHR10938">
    <property type="entry name" value="TRANSLATION INITIATION FACTOR IF-3"/>
    <property type="match status" value="1"/>
</dbReference>
<dbReference type="PANTHER" id="PTHR10938:SF0">
    <property type="entry name" value="TRANSLATION INITIATION FACTOR IF-3, MITOCHONDRIAL"/>
    <property type="match status" value="1"/>
</dbReference>
<dbReference type="Pfam" id="PF00707">
    <property type="entry name" value="IF3_C"/>
    <property type="match status" value="1"/>
</dbReference>
<dbReference type="Pfam" id="PF05198">
    <property type="entry name" value="IF3_N"/>
    <property type="match status" value="1"/>
</dbReference>
<dbReference type="SUPFAM" id="SSF55200">
    <property type="entry name" value="Translation initiation factor IF3, C-terminal domain"/>
    <property type="match status" value="1"/>
</dbReference>
<dbReference type="SUPFAM" id="SSF54364">
    <property type="entry name" value="Translation initiation factor IF3, N-terminal domain"/>
    <property type="match status" value="1"/>
</dbReference>
<dbReference type="PROSITE" id="PS00938">
    <property type="entry name" value="IF3"/>
    <property type="match status" value="1"/>
</dbReference>
<proteinExistence type="inferred from homology"/>
<gene>
    <name evidence="1" type="primary">infC</name>
    <name type="ordered locus">MCCL_1345</name>
</gene>
<keyword id="KW-0963">Cytoplasm</keyword>
<keyword id="KW-0396">Initiation factor</keyword>
<keyword id="KW-0648">Protein biosynthesis</keyword>
<keyword id="KW-1185">Reference proteome</keyword>
<organism>
    <name type="scientific">Macrococcus caseolyticus (strain JCSC5402)</name>
    <name type="common">Macrococcoides caseolyticum</name>
    <dbReference type="NCBI Taxonomy" id="458233"/>
    <lineage>
        <taxon>Bacteria</taxon>
        <taxon>Bacillati</taxon>
        <taxon>Bacillota</taxon>
        <taxon>Bacilli</taxon>
        <taxon>Bacillales</taxon>
        <taxon>Staphylococcaceae</taxon>
        <taxon>Macrococcoides</taxon>
    </lineage>
</organism>
<reference key="1">
    <citation type="journal article" date="2009" name="J. Bacteriol.">
        <title>Complete genome sequence of Macrococcus caseolyticus strain JCSCS5402, reflecting the ancestral genome of the human-pathogenic staphylococci.</title>
        <authorList>
            <person name="Baba T."/>
            <person name="Kuwahara-Arai K."/>
            <person name="Uchiyama I."/>
            <person name="Takeuchi F."/>
            <person name="Ito T."/>
            <person name="Hiramatsu K."/>
        </authorList>
    </citation>
    <scope>NUCLEOTIDE SEQUENCE [LARGE SCALE GENOMIC DNA]</scope>
    <source>
        <strain>JCSC5402</strain>
    </source>
</reference>
<comment type="function">
    <text evidence="1">IF-3 binds to the 30S ribosomal subunit and shifts the equilibrium between 70S ribosomes and their 50S and 30S subunits in favor of the free subunits, thus enhancing the availability of 30S subunits on which protein synthesis initiation begins.</text>
</comment>
<comment type="subunit">
    <text evidence="1">Monomer.</text>
</comment>
<comment type="subcellular location">
    <subcellularLocation>
        <location evidence="1">Cytoplasm</location>
    </subcellularLocation>
</comment>
<comment type="similarity">
    <text evidence="1">Belongs to the IF-3 family.</text>
</comment>
<accession>B9E784</accession>
<name>IF3_MACCJ</name>
<evidence type="ECO:0000255" key="1">
    <source>
        <dbReference type="HAMAP-Rule" id="MF_00080"/>
    </source>
</evidence>